<dbReference type="EMBL" id="AJ235271">
    <property type="protein sequence ID" value="CAA14791.1"/>
    <property type="molecule type" value="Genomic_DNA"/>
</dbReference>
<dbReference type="PIR" id="E71689">
    <property type="entry name" value="E71689"/>
</dbReference>
<dbReference type="RefSeq" id="NP_220714.1">
    <property type="nucleotide sequence ID" value="NC_000963.1"/>
</dbReference>
<dbReference type="STRING" id="272947.gene:17555411"/>
<dbReference type="EnsemblBacteria" id="CAA14791">
    <property type="protein sequence ID" value="CAA14791"/>
    <property type="gene ID" value="CAA14791"/>
</dbReference>
<dbReference type="KEGG" id="rpr:RP331"/>
<dbReference type="HOGENOM" id="CLU_3029535_0_0_5"/>
<dbReference type="Proteomes" id="UP000002480">
    <property type="component" value="Chromosome"/>
</dbReference>
<keyword id="KW-1185">Reference proteome</keyword>
<sequence length="55" mass="6668">MIFYHKKYMHYCINRFLLGMEPIIPACNRRQLISHFRLIKNAIFDIFQASLLPKL</sequence>
<reference key="1">
    <citation type="journal article" date="1998" name="Nature">
        <title>The genome sequence of Rickettsia prowazekii and the origin of mitochondria.</title>
        <authorList>
            <person name="Andersson S.G.E."/>
            <person name="Zomorodipour A."/>
            <person name="Andersson J.O."/>
            <person name="Sicheritz-Ponten T."/>
            <person name="Alsmark U.C.M."/>
            <person name="Podowski R.M."/>
            <person name="Naeslund A.K."/>
            <person name="Eriksson A.-S."/>
            <person name="Winkler H.H."/>
            <person name="Kurland C.G."/>
        </authorList>
    </citation>
    <scope>NUCLEOTIDE SEQUENCE [LARGE SCALE GENOMIC DNA]</scope>
    <source>
        <strain>Madrid E</strain>
    </source>
</reference>
<gene>
    <name type="ordered locus">RP331</name>
</gene>
<accession>Q9ZDJ7</accession>
<feature type="chain" id="PRO_0000101351" description="Uncharacterized protein RP331">
    <location>
        <begin position="1"/>
        <end position="55"/>
    </location>
</feature>
<proteinExistence type="predicted"/>
<name>Y331_RICPR</name>
<organism>
    <name type="scientific">Rickettsia prowazekii (strain Madrid E)</name>
    <dbReference type="NCBI Taxonomy" id="272947"/>
    <lineage>
        <taxon>Bacteria</taxon>
        <taxon>Pseudomonadati</taxon>
        <taxon>Pseudomonadota</taxon>
        <taxon>Alphaproteobacteria</taxon>
        <taxon>Rickettsiales</taxon>
        <taxon>Rickettsiaceae</taxon>
        <taxon>Rickettsieae</taxon>
        <taxon>Rickettsia</taxon>
        <taxon>typhus group</taxon>
    </lineage>
</organism>
<protein>
    <recommendedName>
        <fullName>Uncharacterized protein RP331</fullName>
    </recommendedName>
</protein>